<gene>
    <name type="ordered locus">Os05g0549800</name>
    <name type="ordered locus">LOC_Os05g47650</name>
    <name type="ORF">P0560C03.2</name>
</gene>
<organism>
    <name type="scientific">Oryza sativa subsp. japonica</name>
    <name type="common">Rice</name>
    <dbReference type="NCBI Taxonomy" id="39947"/>
    <lineage>
        <taxon>Eukaryota</taxon>
        <taxon>Viridiplantae</taxon>
        <taxon>Streptophyta</taxon>
        <taxon>Embryophyta</taxon>
        <taxon>Tracheophyta</taxon>
        <taxon>Spermatophyta</taxon>
        <taxon>Magnoliopsida</taxon>
        <taxon>Liliopsida</taxon>
        <taxon>Poales</taxon>
        <taxon>Poaceae</taxon>
        <taxon>BOP clade</taxon>
        <taxon>Oryzoideae</taxon>
        <taxon>Oryzeae</taxon>
        <taxon>Oryzinae</taxon>
        <taxon>Oryza</taxon>
        <taxon>Oryza sativa</taxon>
    </lineage>
</organism>
<comment type="subcellular location">
    <subcellularLocation>
        <location evidence="1 2">Nucleus</location>
    </subcellularLocation>
</comment>
<proteinExistence type="evidence at transcript level"/>
<sequence length="394" mass="41381">MDSTSCLLDDASSGASTGKKAAAAAASKALQRVGSGASAVMDAAEPGAEADSGGERRGGGGGKLPSSKYKGVVPQPNGRWGAQIYERHQRVWLGTFTGEAEAARAYDVAAQRFRGRDAVTNFRPLAESDPEAAVELRFLASRSKAEVVDMLRKHTYLEELTQNKRAFAAISPPPPKHPASSPTSSSAAREHLFDKTVTPSDVGKLNRLVIPKQHAEKHFPLQLPPPTTTSSVAAAADAAAGGGDCKGVLLNFEDAAGKVWKFRYSYWNSSQSYVLTKGWSRFVKEKGLHAGDAVGFYRAAGKNAQLFIDCKVRAKPTTAAAAAAFLSAVAAAAAPPPAVKAIRLFGVDLLTAAAPELQDAGGAAMTKSKRAMDAMAESQAHVVFKKQCIELALT</sequence>
<keyword id="KW-0238">DNA-binding</keyword>
<keyword id="KW-0539">Nucleus</keyword>
<keyword id="KW-1185">Reference proteome</keyword>
<keyword id="KW-0804">Transcription</keyword>
<keyword id="KW-0805">Transcription regulation</keyword>
<name>Y5498_ORYSJ</name>
<evidence type="ECO:0000255" key="1">
    <source>
        <dbReference type="PROSITE-ProRule" id="PRU00326"/>
    </source>
</evidence>
<evidence type="ECO:0000255" key="2">
    <source>
        <dbReference type="PROSITE-ProRule" id="PRU00366"/>
    </source>
</evidence>
<evidence type="ECO:0000256" key="3">
    <source>
        <dbReference type="SAM" id="MobiDB-lite"/>
    </source>
</evidence>
<dbReference type="EMBL" id="AC135925">
    <property type="protein sequence ID" value="AAT39261.1"/>
    <property type="molecule type" value="Genomic_DNA"/>
</dbReference>
<dbReference type="EMBL" id="AP008211">
    <property type="protein sequence ID" value="BAF18151.1"/>
    <property type="molecule type" value="Genomic_DNA"/>
</dbReference>
<dbReference type="EMBL" id="AP014961">
    <property type="status" value="NOT_ANNOTATED_CDS"/>
    <property type="molecule type" value="Genomic_DNA"/>
</dbReference>
<dbReference type="EMBL" id="AK243363">
    <property type="status" value="NOT_ANNOTATED_CDS"/>
    <property type="molecule type" value="mRNA"/>
</dbReference>
<dbReference type="RefSeq" id="XP_015637817.1">
    <property type="nucleotide sequence ID" value="XM_015782331.1"/>
</dbReference>
<dbReference type="SMR" id="Q6L4H4"/>
<dbReference type="FunCoup" id="Q6L4H4">
    <property type="interactions" value="454"/>
</dbReference>
<dbReference type="PaxDb" id="39947-Q6L4H4"/>
<dbReference type="EnsemblPlants" id="Os05t0549800-01">
    <property type="protein sequence ID" value="Os05t0549800-01"/>
    <property type="gene ID" value="Os05g0549800"/>
</dbReference>
<dbReference type="Gramene" id="Os05t0549800-01">
    <property type="protein sequence ID" value="Os05t0549800-01"/>
    <property type="gene ID" value="Os05g0549800"/>
</dbReference>
<dbReference type="KEGG" id="dosa:Os05g0549800"/>
<dbReference type="eggNOG" id="ENOG502QRVI">
    <property type="taxonomic scope" value="Eukaryota"/>
</dbReference>
<dbReference type="HOGENOM" id="CLU_038898_0_0_1"/>
<dbReference type="InParanoid" id="Q6L4H4"/>
<dbReference type="OrthoDB" id="2020802at2759"/>
<dbReference type="Proteomes" id="UP000000763">
    <property type="component" value="Chromosome 5"/>
</dbReference>
<dbReference type="Proteomes" id="UP000059680">
    <property type="component" value="Chromosome 5"/>
</dbReference>
<dbReference type="GO" id="GO:0005634">
    <property type="term" value="C:nucleus"/>
    <property type="evidence" value="ECO:0007669"/>
    <property type="project" value="UniProtKB-SubCell"/>
</dbReference>
<dbReference type="GO" id="GO:0003677">
    <property type="term" value="F:DNA binding"/>
    <property type="evidence" value="ECO:0007669"/>
    <property type="project" value="UniProtKB-KW"/>
</dbReference>
<dbReference type="GO" id="GO:0003700">
    <property type="term" value="F:DNA-binding transcription factor activity"/>
    <property type="evidence" value="ECO:0007669"/>
    <property type="project" value="InterPro"/>
</dbReference>
<dbReference type="CDD" id="cd00018">
    <property type="entry name" value="AP2"/>
    <property type="match status" value="1"/>
</dbReference>
<dbReference type="CDD" id="cd10017">
    <property type="entry name" value="B3_DNA"/>
    <property type="match status" value="1"/>
</dbReference>
<dbReference type="FunFam" id="3.30.730.10:FF:000008">
    <property type="entry name" value="AP2 domain-containing protein RAP2.8"/>
    <property type="match status" value="1"/>
</dbReference>
<dbReference type="Gene3D" id="3.30.730.10">
    <property type="entry name" value="AP2/ERF domain"/>
    <property type="match status" value="1"/>
</dbReference>
<dbReference type="Gene3D" id="2.40.330.10">
    <property type="entry name" value="DNA-binding pseudobarrel domain"/>
    <property type="match status" value="1"/>
</dbReference>
<dbReference type="InterPro" id="IPR001471">
    <property type="entry name" value="AP2/ERF_dom"/>
</dbReference>
<dbReference type="InterPro" id="IPR036955">
    <property type="entry name" value="AP2/ERF_dom_sf"/>
</dbReference>
<dbReference type="InterPro" id="IPR003340">
    <property type="entry name" value="B3_DNA-bd"/>
</dbReference>
<dbReference type="InterPro" id="IPR016177">
    <property type="entry name" value="DNA-bd_dom_sf"/>
</dbReference>
<dbReference type="InterPro" id="IPR015300">
    <property type="entry name" value="DNA-bd_pseudobarrel_sf"/>
</dbReference>
<dbReference type="InterPro" id="IPR044800">
    <property type="entry name" value="LEC2-like"/>
</dbReference>
<dbReference type="PANTHER" id="PTHR31140:SF1">
    <property type="entry name" value="AP2_ERF AND B3 DOMAIN-CONTAINING TRANSCRIPTION REPRESSOR RAV2"/>
    <property type="match status" value="1"/>
</dbReference>
<dbReference type="PANTHER" id="PTHR31140">
    <property type="entry name" value="B3 DOMAIN-CONTAINING TRANSCRIPTION FACTOR ABI3"/>
    <property type="match status" value="1"/>
</dbReference>
<dbReference type="Pfam" id="PF00847">
    <property type="entry name" value="AP2"/>
    <property type="match status" value="1"/>
</dbReference>
<dbReference type="Pfam" id="PF02362">
    <property type="entry name" value="B3"/>
    <property type="match status" value="1"/>
</dbReference>
<dbReference type="SMART" id="SM00380">
    <property type="entry name" value="AP2"/>
    <property type="match status" value="1"/>
</dbReference>
<dbReference type="SMART" id="SM01019">
    <property type="entry name" value="B3"/>
    <property type="match status" value="1"/>
</dbReference>
<dbReference type="SUPFAM" id="SSF54171">
    <property type="entry name" value="DNA-binding domain"/>
    <property type="match status" value="1"/>
</dbReference>
<dbReference type="SUPFAM" id="SSF101936">
    <property type="entry name" value="DNA-binding pseudobarrel domain"/>
    <property type="match status" value="1"/>
</dbReference>
<dbReference type="PROSITE" id="PS51032">
    <property type="entry name" value="AP2_ERF"/>
    <property type="match status" value="1"/>
</dbReference>
<dbReference type="PROSITE" id="PS50863">
    <property type="entry name" value="B3"/>
    <property type="match status" value="1"/>
</dbReference>
<reference key="1">
    <citation type="journal article" date="2005" name="Mol. Genet. Genomics">
        <title>A fine physical map of the rice chromosome 5.</title>
        <authorList>
            <person name="Cheng C.-H."/>
            <person name="Chung M.C."/>
            <person name="Liu S.-M."/>
            <person name="Chen S.-K."/>
            <person name="Kao F.Y."/>
            <person name="Lin S.-J."/>
            <person name="Hsiao S.-H."/>
            <person name="Tseng I.C."/>
            <person name="Hsing Y.-I.C."/>
            <person name="Wu H.-P."/>
            <person name="Chen C.-S."/>
            <person name="Shaw J.-F."/>
            <person name="Wu J."/>
            <person name="Matsumoto T."/>
            <person name="Sasaki T."/>
            <person name="Chen H.-C."/>
            <person name="Chow T.-Y."/>
        </authorList>
    </citation>
    <scope>NUCLEOTIDE SEQUENCE [LARGE SCALE GENOMIC DNA]</scope>
    <source>
        <strain>cv. Nipponbare</strain>
    </source>
</reference>
<reference key="2">
    <citation type="journal article" date="2005" name="Nature">
        <title>The map-based sequence of the rice genome.</title>
        <authorList>
            <consortium name="International rice genome sequencing project (IRGSP)"/>
        </authorList>
    </citation>
    <scope>NUCLEOTIDE SEQUENCE [LARGE SCALE GENOMIC DNA]</scope>
    <source>
        <strain>cv. Nipponbare</strain>
    </source>
</reference>
<reference key="3">
    <citation type="journal article" date="2008" name="Nucleic Acids Res.">
        <title>The rice annotation project database (RAP-DB): 2008 update.</title>
        <authorList>
            <consortium name="The rice annotation project (RAP)"/>
        </authorList>
    </citation>
    <scope>GENOME REANNOTATION</scope>
    <source>
        <strain>cv. Nipponbare</strain>
    </source>
</reference>
<reference key="4">
    <citation type="journal article" date="2013" name="Rice">
        <title>Improvement of the Oryza sativa Nipponbare reference genome using next generation sequence and optical map data.</title>
        <authorList>
            <person name="Kawahara Y."/>
            <person name="de la Bastide M."/>
            <person name="Hamilton J.P."/>
            <person name="Kanamori H."/>
            <person name="McCombie W.R."/>
            <person name="Ouyang S."/>
            <person name="Schwartz D.C."/>
            <person name="Tanaka T."/>
            <person name="Wu J."/>
            <person name="Zhou S."/>
            <person name="Childs K.L."/>
            <person name="Davidson R.M."/>
            <person name="Lin H."/>
            <person name="Quesada-Ocampo L."/>
            <person name="Vaillancourt B."/>
            <person name="Sakai H."/>
            <person name="Lee S.S."/>
            <person name="Kim J."/>
            <person name="Numa H."/>
            <person name="Itoh T."/>
            <person name="Buell C.R."/>
            <person name="Matsumoto T."/>
        </authorList>
    </citation>
    <scope>GENOME REANNOTATION</scope>
    <source>
        <strain>cv. Nipponbare</strain>
    </source>
</reference>
<reference key="5">
    <citation type="submission" date="2006-10" db="EMBL/GenBank/DDBJ databases">
        <title>Oryza sativa full length cDNA.</title>
        <authorList>
            <consortium name="The rice full-length cDNA consortium"/>
        </authorList>
    </citation>
    <scope>NUCLEOTIDE SEQUENCE [LARGE SCALE MRNA] OF 52-394</scope>
    <source>
        <strain>cv. Nipponbare</strain>
    </source>
</reference>
<protein>
    <recommendedName>
        <fullName>AP2/ERF and B3 domain-containing protein Os05g0549800</fullName>
    </recommendedName>
</protein>
<accession>Q6L4H4</accession>
<feature type="chain" id="PRO_0000377733" description="AP2/ERF and B3 domain-containing protein Os05g0549800">
    <location>
        <begin position="1"/>
        <end position="394"/>
    </location>
</feature>
<feature type="DNA-binding region" description="AP2/ERF" evidence="2">
    <location>
        <begin position="68"/>
        <end position="123"/>
    </location>
</feature>
<feature type="DNA-binding region" description="TF-B3" evidence="1">
    <location>
        <begin position="193"/>
        <end position="314"/>
    </location>
</feature>
<feature type="region of interest" description="Disordered" evidence="3">
    <location>
        <begin position="1"/>
        <end position="75"/>
    </location>
</feature>
<feature type="region of interest" description="Disordered" evidence="3">
    <location>
        <begin position="168"/>
        <end position="188"/>
    </location>
</feature>
<feature type="compositionally biased region" description="Low complexity" evidence="3">
    <location>
        <begin position="11"/>
        <end position="29"/>
    </location>
</feature>
<feature type="compositionally biased region" description="Low complexity" evidence="3">
    <location>
        <begin position="178"/>
        <end position="187"/>
    </location>
</feature>